<dbReference type="EC" id="6.3.4.3" evidence="1"/>
<dbReference type="EMBL" id="FM178379">
    <property type="protein sequence ID" value="CAQ79869.1"/>
    <property type="molecule type" value="Genomic_DNA"/>
</dbReference>
<dbReference type="RefSeq" id="WP_012550701.1">
    <property type="nucleotide sequence ID" value="NC_011312.1"/>
</dbReference>
<dbReference type="SMR" id="B6EIJ9"/>
<dbReference type="KEGG" id="vsa:VSAL_I2184"/>
<dbReference type="eggNOG" id="COG2759">
    <property type="taxonomic scope" value="Bacteria"/>
</dbReference>
<dbReference type="HOGENOM" id="CLU_003601_3_3_6"/>
<dbReference type="UniPathway" id="UPA00193"/>
<dbReference type="Proteomes" id="UP000001730">
    <property type="component" value="Chromosome 1"/>
</dbReference>
<dbReference type="GO" id="GO:0005524">
    <property type="term" value="F:ATP binding"/>
    <property type="evidence" value="ECO:0007669"/>
    <property type="project" value="UniProtKB-UniRule"/>
</dbReference>
<dbReference type="GO" id="GO:0004329">
    <property type="term" value="F:formate-tetrahydrofolate ligase activity"/>
    <property type="evidence" value="ECO:0007669"/>
    <property type="project" value="UniProtKB-UniRule"/>
</dbReference>
<dbReference type="GO" id="GO:0035999">
    <property type="term" value="P:tetrahydrofolate interconversion"/>
    <property type="evidence" value="ECO:0007669"/>
    <property type="project" value="UniProtKB-UniRule"/>
</dbReference>
<dbReference type="FunFam" id="3.10.410.10:FF:000001">
    <property type="entry name" value="Putative formate--tetrahydrofolate ligase"/>
    <property type="match status" value="1"/>
</dbReference>
<dbReference type="Gene3D" id="3.10.410.10">
    <property type="entry name" value="Formyltetrahydrofolate synthetase, domain 3"/>
    <property type="match status" value="1"/>
</dbReference>
<dbReference type="Gene3D" id="3.40.50.300">
    <property type="entry name" value="P-loop containing nucleotide triphosphate hydrolases"/>
    <property type="match status" value="3"/>
</dbReference>
<dbReference type="HAMAP" id="MF_01543">
    <property type="entry name" value="FTHFS"/>
    <property type="match status" value="1"/>
</dbReference>
<dbReference type="InterPro" id="IPR000559">
    <property type="entry name" value="Formate_THF_ligase"/>
</dbReference>
<dbReference type="InterPro" id="IPR020628">
    <property type="entry name" value="Formate_THF_ligase_CS"/>
</dbReference>
<dbReference type="InterPro" id="IPR027417">
    <property type="entry name" value="P-loop_NTPase"/>
</dbReference>
<dbReference type="Pfam" id="PF01268">
    <property type="entry name" value="FTHFS"/>
    <property type="match status" value="1"/>
</dbReference>
<dbReference type="SUPFAM" id="SSF52540">
    <property type="entry name" value="P-loop containing nucleoside triphosphate hydrolases"/>
    <property type="match status" value="1"/>
</dbReference>
<dbReference type="PROSITE" id="PS00721">
    <property type="entry name" value="FTHFS_1"/>
    <property type="match status" value="1"/>
</dbReference>
<dbReference type="PROSITE" id="PS00722">
    <property type="entry name" value="FTHFS_2"/>
    <property type="match status" value="1"/>
</dbReference>
<sequence length="554" mass="59636">MKSDIEICQTATLIRMKTIASNLGLHDDDITPQGRYKAKVNIDALKHLEDKPSGKLILVTAITPTPLGEGKTVTTIGLAQGLAKLGESVSACIRQPSMGPVFGVKGGAAGGGYSQVAPMEELNLHLTGDIHAITAAHNLASAAIDARIYHEQRLGYNIFSEKNDLPALRIDPTQVVWKRVMDHNDRALRMVTIGKNEDNKTINGYEREDGFDITAASELMAILALATDLQDLRQRIGRIVVAYNLDGLPITTEDLQVAGAMTVTMKFAINPTLMQTLEGVPTFVHSGPFANIAHGNSSIIADNIALKLTDYTVLVATLRGIKANSGLFPLSSGQSLPKALFVPNQEALIAGLDNLHWHIKNCAKYGLPVVVAINRFPEDTQEELDFLADWVTSQSSELNLDVAISEAFGKGGEGTRELAQKVLIACAQETEFTPLYTPDMSLLDKLTAVAIKGYGAERLELSEKAQQQLAMFEQLGYQHLSVCMAKTPASISTDGNIKGAPTDFIVPIRELRLCAGAGFVYALCGNVMTMPGLPEKPAFMNLDIDSNGNITGLS</sequence>
<evidence type="ECO:0000255" key="1">
    <source>
        <dbReference type="HAMAP-Rule" id="MF_01543"/>
    </source>
</evidence>
<feature type="chain" id="PRO_1000146671" description="Formate--tetrahydrofolate ligase">
    <location>
        <begin position="1"/>
        <end position="554"/>
    </location>
</feature>
<feature type="binding site" evidence="1">
    <location>
        <begin position="65"/>
        <end position="72"/>
    </location>
    <ligand>
        <name>ATP</name>
        <dbReference type="ChEBI" id="CHEBI:30616"/>
    </ligand>
</feature>
<reference key="1">
    <citation type="journal article" date="2008" name="BMC Genomics">
        <title>The genome sequence of the fish pathogen Aliivibrio salmonicida strain LFI1238 shows extensive evidence of gene decay.</title>
        <authorList>
            <person name="Hjerde E."/>
            <person name="Lorentzen M.S."/>
            <person name="Holden M.T."/>
            <person name="Seeger K."/>
            <person name="Paulsen S."/>
            <person name="Bason N."/>
            <person name="Churcher C."/>
            <person name="Harris D."/>
            <person name="Norbertczak H."/>
            <person name="Quail M.A."/>
            <person name="Sanders S."/>
            <person name="Thurston S."/>
            <person name="Parkhill J."/>
            <person name="Willassen N.P."/>
            <person name="Thomson N.R."/>
        </authorList>
    </citation>
    <scope>NUCLEOTIDE SEQUENCE [LARGE SCALE GENOMIC DNA]</scope>
    <source>
        <strain>LFI1238</strain>
    </source>
</reference>
<comment type="catalytic activity">
    <reaction evidence="1">
        <text>(6S)-5,6,7,8-tetrahydrofolate + formate + ATP = (6R)-10-formyltetrahydrofolate + ADP + phosphate</text>
        <dbReference type="Rhea" id="RHEA:20221"/>
        <dbReference type="ChEBI" id="CHEBI:15740"/>
        <dbReference type="ChEBI" id="CHEBI:30616"/>
        <dbReference type="ChEBI" id="CHEBI:43474"/>
        <dbReference type="ChEBI" id="CHEBI:57453"/>
        <dbReference type="ChEBI" id="CHEBI:195366"/>
        <dbReference type="ChEBI" id="CHEBI:456216"/>
        <dbReference type="EC" id="6.3.4.3"/>
    </reaction>
</comment>
<comment type="pathway">
    <text evidence="1">One-carbon metabolism; tetrahydrofolate interconversion.</text>
</comment>
<comment type="similarity">
    <text evidence="1">Belongs to the formate--tetrahydrofolate ligase family.</text>
</comment>
<keyword id="KW-0067">ATP-binding</keyword>
<keyword id="KW-0436">Ligase</keyword>
<keyword id="KW-0547">Nucleotide-binding</keyword>
<keyword id="KW-0554">One-carbon metabolism</keyword>
<proteinExistence type="inferred from homology"/>
<name>FTHS_ALISL</name>
<protein>
    <recommendedName>
        <fullName evidence="1">Formate--tetrahydrofolate ligase</fullName>
        <ecNumber evidence="1">6.3.4.3</ecNumber>
    </recommendedName>
    <alternativeName>
        <fullName evidence="1">Formyltetrahydrofolate synthetase</fullName>
        <shortName evidence="1">FHS</shortName>
        <shortName evidence="1">FTHFS</shortName>
    </alternativeName>
</protein>
<organism>
    <name type="scientific">Aliivibrio salmonicida (strain LFI1238)</name>
    <name type="common">Vibrio salmonicida (strain LFI1238)</name>
    <dbReference type="NCBI Taxonomy" id="316275"/>
    <lineage>
        <taxon>Bacteria</taxon>
        <taxon>Pseudomonadati</taxon>
        <taxon>Pseudomonadota</taxon>
        <taxon>Gammaproteobacteria</taxon>
        <taxon>Vibrionales</taxon>
        <taxon>Vibrionaceae</taxon>
        <taxon>Aliivibrio</taxon>
    </lineage>
</organism>
<accession>B6EIJ9</accession>
<gene>
    <name evidence="1" type="primary">fhs</name>
    <name type="ordered locus">VSAL_I2184</name>
</gene>